<keyword id="KW-0963">Cytoplasm</keyword>
<keyword id="KW-0238">DNA-binding</keyword>
<keyword id="KW-1185">Reference proteome</keyword>
<keyword id="KW-0804">Transcription</keyword>
<keyword id="KW-0805">Transcription regulation</keyword>
<sequence length="247" mass="26243">MAGHSKWANTKHRKAAQDAKRGKIFTKIIRELVTAARLGGGDPGANPRLRAAIDKALSNNMTRDTLNRAIARGVGGDEDNNMETIIYEGYGPGGTAVMVECLSDNRNRTVSEVRHAFTKTGGNLGTDGSVSYLFTKKGVISYAPGLEEDTVMDAALEAGADDIVVYDDGAIDVFTAWESLGAVKDALDATGLVAEGAEVSLIPSTKAELDAETAPKLLRLIDMLEDSDDVQEVYHNGEISDEVAATL</sequence>
<accession>Q8ZEU8</accession>
<accession>Q0WFA1</accession>
<accession>Q8D0F0</accession>
<proteinExistence type="inferred from homology"/>
<protein>
    <recommendedName>
        <fullName evidence="1">Probable transcriptional regulatory protein YPO2055/y2255/YP_1898</fullName>
    </recommendedName>
</protein>
<organism>
    <name type="scientific">Yersinia pestis</name>
    <dbReference type="NCBI Taxonomy" id="632"/>
    <lineage>
        <taxon>Bacteria</taxon>
        <taxon>Pseudomonadati</taxon>
        <taxon>Pseudomonadota</taxon>
        <taxon>Gammaproteobacteria</taxon>
        <taxon>Enterobacterales</taxon>
        <taxon>Yersiniaceae</taxon>
        <taxon>Yersinia</taxon>
    </lineage>
</organism>
<name>Y2055_YERPE</name>
<reference key="1">
    <citation type="journal article" date="2001" name="Nature">
        <title>Genome sequence of Yersinia pestis, the causative agent of plague.</title>
        <authorList>
            <person name="Parkhill J."/>
            <person name="Wren B.W."/>
            <person name="Thomson N.R."/>
            <person name="Titball R.W."/>
            <person name="Holden M.T.G."/>
            <person name="Prentice M.B."/>
            <person name="Sebaihia M."/>
            <person name="James K.D."/>
            <person name="Churcher C.M."/>
            <person name="Mungall K.L."/>
            <person name="Baker S."/>
            <person name="Basham D."/>
            <person name="Bentley S.D."/>
            <person name="Brooks K."/>
            <person name="Cerdeno-Tarraga A.-M."/>
            <person name="Chillingworth T."/>
            <person name="Cronin A."/>
            <person name="Davies R.M."/>
            <person name="Davis P."/>
            <person name="Dougan G."/>
            <person name="Feltwell T."/>
            <person name="Hamlin N."/>
            <person name="Holroyd S."/>
            <person name="Jagels K."/>
            <person name="Karlyshev A.V."/>
            <person name="Leather S."/>
            <person name="Moule S."/>
            <person name="Oyston P.C.F."/>
            <person name="Quail M.A."/>
            <person name="Rutherford K.M."/>
            <person name="Simmonds M."/>
            <person name="Skelton J."/>
            <person name="Stevens K."/>
            <person name="Whitehead S."/>
            <person name="Barrell B.G."/>
        </authorList>
    </citation>
    <scope>NUCLEOTIDE SEQUENCE [LARGE SCALE GENOMIC DNA]</scope>
    <source>
        <strain>CO-92 / Biovar Orientalis</strain>
    </source>
</reference>
<reference key="2">
    <citation type="journal article" date="2002" name="J. Bacteriol.">
        <title>Genome sequence of Yersinia pestis KIM.</title>
        <authorList>
            <person name="Deng W."/>
            <person name="Burland V."/>
            <person name="Plunkett G. III"/>
            <person name="Boutin A."/>
            <person name="Mayhew G.F."/>
            <person name="Liss P."/>
            <person name="Perna N.T."/>
            <person name="Rose D.J."/>
            <person name="Mau B."/>
            <person name="Zhou S."/>
            <person name="Schwartz D.C."/>
            <person name="Fetherston J.D."/>
            <person name="Lindler L.E."/>
            <person name="Brubaker R.R."/>
            <person name="Plano G.V."/>
            <person name="Straley S.C."/>
            <person name="McDonough K.A."/>
            <person name="Nilles M.L."/>
            <person name="Matson J.S."/>
            <person name="Blattner F.R."/>
            <person name="Perry R.D."/>
        </authorList>
    </citation>
    <scope>NUCLEOTIDE SEQUENCE [LARGE SCALE GENOMIC DNA]</scope>
    <source>
        <strain>KIM10+ / Biovar Mediaevalis</strain>
    </source>
</reference>
<reference key="3">
    <citation type="journal article" date="2004" name="DNA Res.">
        <title>Complete genome sequence of Yersinia pestis strain 91001, an isolate avirulent to humans.</title>
        <authorList>
            <person name="Song Y."/>
            <person name="Tong Z."/>
            <person name="Wang J."/>
            <person name="Wang L."/>
            <person name="Guo Z."/>
            <person name="Han Y."/>
            <person name="Zhang J."/>
            <person name="Pei D."/>
            <person name="Zhou D."/>
            <person name="Qin H."/>
            <person name="Pang X."/>
            <person name="Han Y."/>
            <person name="Zhai J."/>
            <person name="Li M."/>
            <person name="Cui B."/>
            <person name="Qi Z."/>
            <person name="Jin L."/>
            <person name="Dai R."/>
            <person name="Chen F."/>
            <person name="Li S."/>
            <person name="Ye C."/>
            <person name="Du Z."/>
            <person name="Lin W."/>
            <person name="Wang J."/>
            <person name="Yu J."/>
            <person name="Yang H."/>
            <person name="Wang J."/>
            <person name="Huang P."/>
            <person name="Yang R."/>
        </authorList>
    </citation>
    <scope>NUCLEOTIDE SEQUENCE [LARGE SCALE GENOMIC DNA]</scope>
    <source>
        <strain>91001 / Biovar Mediaevalis</strain>
    </source>
</reference>
<dbReference type="EMBL" id="AL590842">
    <property type="protein sequence ID" value="CAL20690.1"/>
    <property type="molecule type" value="Genomic_DNA"/>
</dbReference>
<dbReference type="EMBL" id="AE009952">
    <property type="protein sequence ID" value="AAM85815.1"/>
    <property type="status" value="ALT_INIT"/>
    <property type="molecule type" value="Genomic_DNA"/>
</dbReference>
<dbReference type="EMBL" id="AE017042">
    <property type="protein sequence ID" value="AAS62116.1"/>
    <property type="status" value="ALT_INIT"/>
    <property type="molecule type" value="Genomic_DNA"/>
</dbReference>
<dbReference type="PIR" id="AG0250">
    <property type="entry name" value="AG0250"/>
</dbReference>
<dbReference type="RefSeq" id="WP_002211202.1">
    <property type="nucleotide sequence ID" value="NZ_WUCM01000062.1"/>
</dbReference>
<dbReference type="RefSeq" id="YP_002347037.1">
    <property type="nucleotide sequence ID" value="NC_003143.1"/>
</dbReference>
<dbReference type="SMR" id="Q8ZEU8"/>
<dbReference type="IntAct" id="Q8ZEU8">
    <property type="interactions" value="2"/>
</dbReference>
<dbReference type="STRING" id="214092.YPO2055"/>
<dbReference type="PaxDb" id="214092-YPO2055"/>
<dbReference type="EnsemblBacteria" id="AAS62116">
    <property type="protein sequence ID" value="AAS62116"/>
    <property type="gene ID" value="YP_1898"/>
</dbReference>
<dbReference type="KEGG" id="ype:YPO2055"/>
<dbReference type="KEGG" id="ypk:y2255"/>
<dbReference type="KEGG" id="ypm:YP_1898"/>
<dbReference type="PATRIC" id="fig|214092.21.peg.2442"/>
<dbReference type="eggNOG" id="COG0217">
    <property type="taxonomic scope" value="Bacteria"/>
</dbReference>
<dbReference type="HOGENOM" id="CLU_062974_2_2_6"/>
<dbReference type="OMA" id="NFDIPDE"/>
<dbReference type="OrthoDB" id="9781053at2"/>
<dbReference type="Proteomes" id="UP000000815">
    <property type="component" value="Chromosome"/>
</dbReference>
<dbReference type="Proteomes" id="UP000001019">
    <property type="component" value="Chromosome"/>
</dbReference>
<dbReference type="Proteomes" id="UP000002490">
    <property type="component" value="Chromosome"/>
</dbReference>
<dbReference type="GO" id="GO:0005829">
    <property type="term" value="C:cytosol"/>
    <property type="evidence" value="ECO:0000318"/>
    <property type="project" value="GO_Central"/>
</dbReference>
<dbReference type="GO" id="GO:0003677">
    <property type="term" value="F:DNA binding"/>
    <property type="evidence" value="ECO:0007669"/>
    <property type="project" value="UniProtKB-UniRule"/>
</dbReference>
<dbReference type="GO" id="GO:0006355">
    <property type="term" value="P:regulation of DNA-templated transcription"/>
    <property type="evidence" value="ECO:0007669"/>
    <property type="project" value="UniProtKB-UniRule"/>
</dbReference>
<dbReference type="FunFam" id="1.10.10.200:FF:000001">
    <property type="entry name" value="Probable transcriptional regulatory protein YebC"/>
    <property type="match status" value="1"/>
</dbReference>
<dbReference type="FunFam" id="3.30.70.980:FF:000002">
    <property type="entry name" value="Probable transcriptional regulatory protein YebC"/>
    <property type="match status" value="1"/>
</dbReference>
<dbReference type="Gene3D" id="1.10.10.200">
    <property type="match status" value="1"/>
</dbReference>
<dbReference type="Gene3D" id="3.30.70.980">
    <property type="match status" value="2"/>
</dbReference>
<dbReference type="HAMAP" id="MF_00693">
    <property type="entry name" value="Transcrip_reg_TACO1"/>
    <property type="match status" value="1"/>
</dbReference>
<dbReference type="InterPro" id="IPR017856">
    <property type="entry name" value="Integrase-like_N"/>
</dbReference>
<dbReference type="InterPro" id="IPR048300">
    <property type="entry name" value="TACO1_YebC-like_2nd/3rd_dom"/>
</dbReference>
<dbReference type="InterPro" id="IPR049083">
    <property type="entry name" value="TACO1_YebC_N"/>
</dbReference>
<dbReference type="InterPro" id="IPR002876">
    <property type="entry name" value="Transcrip_reg_TACO1-like"/>
</dbReference>
<dbReference type="InterPro" id="IPR026564">
    <property type="entry name" value="Transcrip_reg_TACO1-like_dom3"/>
</dbReference>
<dbReference type="InterPro" id="IPR029072">
    <property type="entry name" value="YebC-like"/>
</dbReference>
<dbReference type="NCBIfam" id="NF001030">
    <property type="entry name" value="PRK00110.1"/>
    <property type="match status" value="1"/>
</dbReference>
<dbReference type="NCBIfam" id="NF009044">
    <property type="entry name" value="PRK12378.1"/>
    <property type="match status" value="1"/>
</dbReference>
<dbReference type="NCBIfam" id="TIGR01033">
    <property type="entry name" value="YebC/PmpR family DNA-binding transcriptional regulator"/>
    <property type="match status" value="1"/>
</dbReference>
<dbReference type="PANTHER" id="PTHR12532:SF6">
    <property type="entry name" value="TRANSCRIPTIONAL REGULATORY PROTEIN YEBC-RELATED"/>
    <property type="match status" value="1"/>
</dbReference>
<dbReference type="PANTHER" id="PTHR12532">
    <property type="entry name" value="TRANSLATIONAL ACTIVATOR OF CYTOCHROME C OXIDASE 1"/>
    <property type="match status" value="1"/>
</dbReference>
<dbReference type="Pfam" id="PF20772">
    <property type="entry name" value="TACO1_YebC_N"/>
    <property type="match status" value="1"/>
</dbReference>
<dbReference type="Pfam" id="PF01709">
    <property type="entry name" value="Transcrip_reg"/>
    <property type="match status" value="1"/>
</dbReference>
<dbReference type="SUPFAM" id="SSF75625">
    <property type="entry name" value="YebC-like"/>
    <property type="match status" value="1"/>
</dbReference>
<comment type="subcellular location">
    <subcellularLocation>
        <location evidence="1">Cytoplasm</location>
    </subcellularLocation>
</comment>
<comment type="similarity">
    <text evidence="1">Belongs to the TACO1 family.</text>
</comment>
<comment type="sequence caution" evidence="2">
    <conflict type="erroneous initiation">
        <sequence resource="EMBL-CDS" id="AAM85815"/>
    </conflict>
</comment>
<comment type="sequence caution" evidence="2">
    <conflict type="erroneous initiation">
        <sequence resource="EMBL-CDS" id="AAS62116"/>
    </conflict>
</comment>
<evidence type="ECO:0000255" key="1">
    <source>
        <dbReference type="HAMAP-Rule" id="MF_00693"/>
    </source>
</evidence>
<evidence type="ECO:0000305" key="2"/>
<feature type="chain" id="PRO_0000175939" description="Probable transcriptional regulatory protein YPO2055/y2255/YP_1898">
    <location>
        <begin position="1"/>
        <end position="247"/>
    </location>
</feature>
<gene>
    <name type="ordered locus">YPO2055</name>
    <name type="ordered locus">y2255</name>
    <name type="ordered locus">YP_1898</name>
</gene>